<comment type="function">
    <text>Putative cyclic nucleotide-gated ion channel.</text>
</comment>
<comment type="subunit">
    <text evidence="4">Homotetramer or heterotetramer.</text>
</comment>
<comment type="subcellular location">
    <subcellularLocation>
        <location evidence="4">Cell membrane</location>
        <topology evidence="4">Multi-pass membrane protein</topology>
    </subcellularLocation>
</comment>
<comment type="domain">
    <text evidence="1">The binding of calmodulin to the C-terminus might interfere with cyclic nucleotide binding and thus channel activation.</text>
</comment>
<comment type="similarity">
    <text evidence="4">Belongs to the cyclic nucleotide-gated cation channel (TC 1.A.1.5) family.</text>
</comment>
<comment type="sequence caution" evidence="4">
    <conflict type="erroneous gene model prediction">
        <sequence resource="EMBL-CDS" id="CAB45784"/>
    </conflict>
</comment>
<comment type="sequence caution" evidence="4">
    <conflict type="erroneous gene model prediction">
        <sequence resource="EMBL-CDS" id="CAB80910"/>
    </conflict>
</comment>
<accession>Q9LD40</accession>
<feature type="chain" id="PRO_0000219341" description="Putative cyclic nucleotide-gated ion channel 13">
    <location>
        <begin position="1"/>
        <end position="696"/>
    </location>
</feature>
<feature type="topological domain" description="Cytoplasmic" evidence="2">
    <location>
        <begin position="1"/>
        <end position="81"/>
    </location>
</feature>
<feature type="transmembrane region" description="Helical; Name=H1" evidence="2">
    <location>
        <begin position="82"/>
        <end position="102"/>
    </location>
</feature>
<feature type="topological domain" description="Extracellular" evidence="2">
    <location>
        <begin position="103"/>
        <end position="116"/>
    </location>
</feature>
<feature type="transmembrane region" description="Helical; Name=H2" evidence="2">
    <location>
        <begin position="117"/>
        <end position="137"/>
    </location>
</feature>
<feature type="topological domain" description="Cytoplasmic" evidence="2">
    <location>
        <begin position="138"/>
        <end position="170"/>
    </location>
</feature>
<feature type="transmembrane region" description="Helical; Name=H3" evidence="2">
    <location>
        <begin position="171"/>
        <end position="191"/>
    </location>
</feature>
<feature type="topological domain" description="Extracellular" evidence="2">
    <location>
        <begin position="192"/>
        <end position="204"/>
    </location>
</feature>
<feature type="transmembrane region" description="Helical; Name=H4" evidence="2">
    <location>
        <begin position="205"/>
        <end position="225"/>
    </location>
</feature>
<feature type="topological domain" description="Cytoplasmic" evidence="2">
    <location>
        <begin position="226"/>
        <end position="243"/>
    </location>
</feature>
<feature type="transmembrane region" description="Helical; Name=H5" evidence="2">
    <location>
        <begin position="244"/>
        <end position="264"/>
    </location>
</feature>
<feature type="topological domain" description="Extracellular" evidence="2">
    <location>
        <begin position="265"/>
        <end position="367"/>
    </location>
</feature>
<feature type="transmembrane region" description="Helical; Name=H6" evidence="2">
    <location>
        <begin position="368"/>
        <end position="388"/>
    </location>
</feature>
<feature type="topological domain" description="Cytoplasmic" evidence="2">
    <location>
        <begin position="389"/>
        <end position="696"/>
    </location>
</feature>
<feature type="domain" description="IQ">
    <location>
        <begin position="610"/>
        <end position="639"/>
    </location>
</feature>
<feature type="region of interest" description="Disordered" evidence="3">
    <location>
        <begin position="45"/>
        <end position="65"/>
    </location>
</feature>
<feature type="region of interest" description="Calmodulin-binding" evidence="1">
    <location>
        <begin position="590"/>
        <end position="605"/>
    </location>
</feature>
<feature type="region of interest" description="Disordered" evidence="3">
    <location>
        <begin position="677"/>
        <end position="696"/>
    </location>
</feature>
<feature type="binding site">
    <location>
        <begin position="474"/>
        <end position="598"/>
    </location>
    <ligand>
        <name>a nucleoside 3',5'-cyclic phosphate</name>
        <dbReference type="ChEBI" id="CHEBI:58464"/>
    </ligand>
</feature>
<feature type="binding site" evidence="1">
    <location>
        <position position="545"/>
    </location>
    <ligand>
        <name>a nucleoside 3',5'-cyclic phosphate</name>
        <dbReference type="ChEBI" id="CHEBI:58464"/>
    </ligand>
</feature>
<gene>
    <name type="primary">CNGC13</name>
    <name type="ordered locus">At4g01010</name>
    <name type="ORF">F3I3.1</name>
</gene>
<sequence length="696" mass="80474">MAFGRNNRVRFRDWISEGTEYGYGRNKARPSLNTVLKNVRRGLKKPLSFGSHNKKRDSNSSTTTQKNIINPQGSFLQNWNKIFLFASVIALAIDPLFFYIPIVDGERHCLNLHRNLEIAASVLRTFIDAFYIIHIVFQFRTAYISPSSRVFGRGELVDDPKAIAIKYLSSYFIIDLLSILPLPQLVVLAVIPNVNKPVSLITKDYLITVIFTQYIPRILRIYPLYTEVTRTSGIVTETAWAGAAWNLSLYMLASHVFGALWYLISVEREDRCWREACEKIPEVCNFRFLYCDGNSSVRNDFLTTSCPFINPDDITNSTVFNFGIFTDALKSGIVESDDFWKKFFYCFWWGLRNLSALGQNLNTSKFVGEIIFAVSICISGLVLFALLIGNMQKYLESTTVREEEMRVRKRDAEQWMSHRMLPDDLRKRIRRYEQYKWQETRGVEEENLLRNLPKDLRRDIKRHFCLDLLKKVPLFEIMDEQLLDAVCDKLKPVLYTENSYAIREGDPVEEMLFVMRGKLMSATTNGGRTGFFNAVYLKPSDFCGEDLLTWALDPQSSSHFPISTRTVQALTEVEAFALAADDLKLVASQFRRLHSKQLQHTFRFYSVQWRTWGASFIQAAWRRHCRRKLARSLTEEEDRFRNAITKRERNAASSSSLVATLYASRFASNALRNLRTNNLPLLPPKPSEPDFSLRNP</sequence>
<protein>
    <recommendedName>
        <fullName>Putative cyclic nucleotide-gated ion channel 13</fullName>
    </recommendedName>
    <alternativeName>
        <fullName>Cyclic nucleotide- and calmodulin-regulated ion channel 13</fullName>
    </alternativeName>
</protein>
<keyword id="KW-0112">Calmodulin-binding</keyword>
<keyword id="KW-0114">cAMP</keyword>
<keyword id="KW-0116">cAMP-binding</keyword>
<keyword id="KW-1003">Cell membrane</keyword>
<keyword id="KW-0140">cGMP</keyword>
<keyword id="KW-0142">cGMP-binding</keyword>
<keyword id="KW-0407">Ion channel</keyword>
<keyword id="KW-0406">Ion transport</keyword>
<keyword id="KW-1071">Ligand-gated ion channel</keyword>
<keyword id="KW-0472">Membrane</keyword>
<keyword id="KW-0547">Nucleotide-binding</keyword>
<keyword id="KW-1185">Reference proteome</keyword>
<keyword id="KW-0812">Transmembrane</keyword>
<keyword id="KW-1133">Transmembrane helix</keyword>
<keyword id="KW-0813">Transport</keyword>
<proteinExistence type="inferred from homology"/>
<evidence type="ECO:0000250" key="1"/>
<evidence type="ECO:0000255" key="2"/>
<evidence type="ECO:0000256" key="3">
    <source>
        <dbReference type="SAM" id="MobiDB-lite"/>
    </source>
</evidence>
<evidence type="ECO:0000305" key="4"/>
<reference key="1">
    <citation type="journal article" date="1999" name="Nature">
        <title>Sequence and analysis of chromosome 4 of the plant Arabidopsis thaliana.</title>
        <authorList>
            <person name="Mayer K.F.X."/>
            <person name="Schueller C."/>
            <person name="Wambutt R."/>
            <person name="Murphy G."/>
            <person name="Volckaert G."/>
            <person name="Pohl T."/>
            <person name="Duesterhoeft A."/>
            <person name="Stiekema W."/>
            <person name="Entian K.-D."/>
            <person name="Terryn N."/>
            <person name="Harris B."/>
            <person name="Ansorge W."/>
            <person name="Brandt P."/>
            <person name="Grivell L.A."/>
            <person name="Rieger M."/>
            <person name="Weichselgartner M."/>
            <person name="de Simone V."/>
            <person name="Obermaier B."/>
            <person name="Mache R."/>
            <person name="Mueller M."/>
            <person name="Kreis M."/>
            <person name="Delseny M."/>
            <person name="Puigdomenech P."/>
            <person name="Watson M."/>
            <person name="Schmidtheini T."/>
            <person name="Reichert B."/>
            <person name="Portetelle D."/>
            <person name="Perez-Alonso M."/>
            <person name="Boutry M."/>
            <person name="Bancroft I."/>
            <person name="Vos P."/>
            <person name="Hoheisel J."/>
            <person name="Zimmermann W."/>
            <person name="Wedler H."/>
            <person name="Ridley P."/>
            <person name="Langham S.-A."/>
            <person name="McCullagh B."/>
            <person name="Bilham L."/>
            <person name="Robben J."/>
            <person name="van der Schueren J."/>
            <person name="Grymonprez B."/>
            <person name="Chuang Y.-J."/>
            <person name="Vandenbussche F."/>
            <person name="Braeken M."/>
            <person name="Weltjens I."/>
            <person name="Voet M."/>
            <person name="Bastiaens I."/>
            <person name="Aert R."/>
            <person name="Defoor E."/>
            <person name="Weitzenegger T."/>
            <person name="Bothe G."/>
            <person name="Ramsperger U."/>
            <person name="Hilbert H."/>
            <person name="Braun M."/>
            <person name="Holzer E."/>
            <person name="Brandt A."/>
            <person name="Peters S."/>
            <person name="van Staveren M."/>
            <person name="Dirkse W."/>
            <person name="Mooijman P."/>
            <person name="Klein Lankhorst R."/>
            <person name="Rose M."/>
            <person name="Hauf J."/>
            <person name="Koetter P."/>
            <person name="Berneiser S."/>
            <person name="Hempel S."/>
            <person name="Feldpausch M."/>
            <person name="Lamberth S."/>
            <person name="Van den Daele H."/>
            <person name="De Keyser A."/>
            <person name="Buysshaert C."/>
            <person name="Gielen J."/>
            <person name="Villarroel R."/>
            <person name="De Clercq R."/>
            <person name="van Montagu M."/>
            <person name="Rogers J."/>
            <person name="Cronin A."/>
            <person name="Quail M.A."/>
            <person name="Bray-Allen S."/>
            <person name="Clark L."/>
            <person name="Doggett J."/>
            <person name="Hall S."/>
            <person name="Kay M."/>
            <person name="Lennard N."/>
            <person name="McLay K."/>
            <person name="Mayes R."/>
            <person name="Pettett A."/>
            <person name="Rajandream M.A."/>
            <person name="Lyne M."/>
            <person name="Benes V."/>
            <person name="Rechmann S."/>
            <person name="Borkova D."/>
            <person name="Bloecker H."/>
            <person name="Scharfe M."/>
            <person name="Grimm M."/>
            <person name="Loehnert T.-H."/>
            <person name="Dose S."/>
            <person name="de Haan M."/>
            <person name="Maarse A.C."/>
            <person name="Schaefer M."/>
            <person name="Mueller-Auer S."/>
            <person name="Gabel C."/>
            <person name="Fuchs M."/>
            <person name="Fartmann B."/>
            <person name="Granderath K."/>
            <person name="Dauner D."/>
            <person name="Herzl A."/>
            <person name="Neumann S."/>
            <person name="Argiriou A."/>
            <person name="Vitale D."/>
            <person name="Liguori R."/>
            <person name="Piravandi E."/>
            <person name="Massenet O."/>
            <person name="Quigley F."/>
            <person name="Clabauld G."/>
            <person name="Muendlein A."/>
            <person name="Felber R."/>
            <person name="Schnabl S."/>
            <person name="Hiller R."/>
            <person name="Schmidt W."/>
            <person name="Lecharny A."/>
            <person name="Aubourg S."/>
            <person name="Chefdor F."/>
            <person name="Cooke R."/>
            <person name="Berger C."/>
            <person name="Monfort A."/>
            <person name="Casacuberta E."/>
            <person name="Gibbons T."/>
            <person name="Weber N."/>
            <person name="Vandenbol M."/>
            <person name="Bargues M."/>
            <person name="Terol J."/>
            <person name="Torres A."/>
            <person name="Perez-Perez A."/>
            <person name="Purnelle B."/>
            <person name="Bent E."/>
            <person name="Johnson S."/>
            <person name="Tacon D."/>
            <person name="Jesse T."/>
            <person name="Heijnen L."/>
            <person name="Schwarz S."/>
            <person name="Scholler P."/>
            <person name="Heber S."/>
            <person name="Francs P."/>
            <person name="Bielke C."/>
            <person name="Frishman D."/>
            <person name="Haase D."/>
            <person name="Lemcke K."/>
            <person name="Mewes H.-W."/>
            <person name="Stocker S."/>
            <person name="Zaccaria P."/>
            <person name="Bevan M."/>
            <person name="Wilson R.K."/>
            <person name="de la Bastide M."/>
            <person name="Habermann K."/>
            <person name="Parnell L."/>
            <person name="Dedhia N."/>
            <person name="Gnoj L."/>
            <person name="Schutz K."/>
            <person name="Huang E."/>
            <person name="Spiegel L."/>
            <person name="Sekhon M."/>
            <person name="Murray J."/>
            <person name="Sheet P."/>
            <person name="Cordes M."/>
            <person name="Abu-Threideh J."/>
            <person name="Stoneking T."/>
            <person name="Kalicki J."/>
            <person name="Graves T."/>
            <person name="Harmon G."/>
            <person name="Edwards J."/>
            <person name="Latreille P."/>
            <person name="Courtney L."/>
            <person name="Cloud J."/>
            <person name="Abbott A."/>
            <person name="Scott K."/>
            <person name="Johnson D."/>
            <person name="Minx P."/>
            <person name="Bentley D."/>
            <person name="Fulton B."/>
            <person name="Miller N."/>
            <person name="Greco T."/>
            <person name="Kemp K."/>
            <person name="Kramer J."/>
            <person name="Fulton L."/>
            <person name="Mardis E."/>
            <person name="Dante M."/>
            <person name="Pepin K."/>
            <person name="Hillier L.W."/>
            <person name="Nelson J."/>
            <person name="Spieth J."/>
            <person name="Ryan E."/>
            <person name="Andrews S."/>
            <person name="Geisel C."/>
            <person name="Layman D."/>
            <person name="Du H."/>
            <person name="Ali J."/>
            <person name="Berghoff A."/>
            <person name="Jones K."/>
            <person name="Drone K."/>
            <person name="Cotton M."/>
            <person name="Joshu C."/>
            <person name="Antonoiu B."/>
            <person name="Zidanic M."/>
            <person name="Strong C."/>
            <person name="Sun H."/>
            <person name="Lamar B."/>
            <person name="Yordan C."/>
            <person name="Ma P."/>
            <person name="Zhong J."/>
            <person name="Preston R."/>
            <person name="Vil D."/>
            <person name="Shekher M."/>
            <person name="Matero A."/>
            <person name="Shah R."/>
            <person name="Swaby I.K."/>
            <person name="O'Shaughnessy A."/>
            <person name="Rodriguez M."/>
            <person name="Hoffman J."/>
            <person name="Till S."/>
            <person name="Granat S."/>
            <person name="Shohdy N."/>
            <person name="Hasegawa A."/>
            <person name="Hameed A."/>
            <person name="Lodhi M."/>
            <person name="Johnson A."/>
            <person name="Chen E."/>
            <person name="Marra M.A."/>
            <person name="Martienssen R."/>
            <person name="McCombie W.R."/>
        </authorList>
    </citation>
    <scope>NUCLEOTIDE SEQUENCE [LARGE SCALE GENOMIC DNA]</scope>
    <source>
        <strain>cv. Columbia</strain>
    </source>
</reference>
<reference key="2">
    <citation type="journal article" date="2017" name="Plant J.">
        <title>Araport11: a complete reannotation of the Arabidopsis thaliana reference genome.</title>
        <authorList>
            <person name="Cheng C.Y."/>
            <person name="Krishnakumar V."/>
            <person name="Chan A.P."/>
            <person name="Thibaud-Nissen F."/>
            <person name="Schobel S."/>
            <person name="Town C.D."/>
        </authorList>
    </citation>
    <scope>GENOME REANNOTATION</scope>
    <source>
        <strain>cv. Columbia</strain>
    </source>
</reference>
<reference key="3">
    <citation type="journal article" date="2001" name="Plant Physiol.">
        <title>Phylogenetic relationships within cation transporter families of Arabidopsis.</title>
        <authorList>
            <person name="Maeser P."/>
            <person name="Thomine S."/>
            <person name="Schroeder J.I."/>
            <person name="Ward J.M."/>
            <person name="Hirschi K."/>
            <person name="Sze H."/>
            <person name="Talke I.N."/>
            <person name="Amtmann A."/>
            <person name="Maathuis F.J.M."/>
            <person name="Sanders D."/>
            <person name="Harper J.F."/>
            <person name="Tchieu J."/>
            <person name="Gribskov M."/>
            <person name="Persans M.W."/>
            <person name="Salt D.E."/>
            <person name="Kim S.A."/>
            <person name="Guerinot M.L."/>
        </authorList>
    </citation>
    <scope>GENE FAMILY</scope>
    <scope>NOMENCLATURE</scope>
</reference>
<dbReference type="EMBL" id="AL080237">
    <property type="protein sequence ID" value="CAB45784.2"/>
    <property type="status" value="ALT_SEQ"/>
    <property type="molecule type" value="Genomic_DNA"/>
</dbReference>
<dbReference type="EMBL" id="AL161491">
    <property type="protein sequence ID" value="CAB80910.1"/>
    <property type="status" value="ALT_SEQ"/>
    <property type="molecule type" value="Genomic_DNA"/>
</dbReference>
<dbReference type="EMBL" id="CP002687">
    <property type="protein sequence ID" value="AEE81966.1"/>
    <property type="molecule type" value="Genomic_DNA"/>
</dbReference>
<dbReference type="EMBL" id="CP002687">
    <property type="protein sequence ID" value="ANM68044.1"/>
    <property type="molecule type" value="Genomic_DNA"/>
</dbReference>
<dbReference type="PIR" id="D85013">
    <property type="entry name" value="D85013"/>
</dbReference>
<dbReference type="RefSeq" id="NP_001319839.1">
    <property type="nucleotide sequence ID" value="NM_001340295.1"/>
</dbReference>
<dbReference type="RefSeq" id="NP_192010.2">
    <property type="nucleotide sequence ID" value="NM_116329.3"/>
</dbReference>
<dbReference type="SMR" id="Q9LD40"/>
<dbReference type="BioGRID" id="11726">
    <property type="interactions" value="38"/>
</dbReference>
<dbReference type="FunCoup" id="Q9LD40">
    <property type="interactions" value="202"/>
</dbReference>
<dbReference type="IntAct" id="Q9LD40">
    <property type="interactions" value="3"/>
</dbReference>
<dbReference type="STRING" id="3702.Q9LD40"/>
<dbReference type="PaxDb" id="3702-AT4G01010.1"/>
<dbReference type="ProteomicsDB" id="220538"/>
<dbReference type="EnsemblPlants" id="AT4G01010.1">
    <property type="protein sequence ID" value="AT4G01010.1"/>
    <property type="gene ID" value="AT4G01010"/>
</dbReference>
<dbReference type="EnsemblPlants" id="AT4G01010.2">
    <property type="protein sequence ID" value="AT4G01010.2"/>
    <property type="gene ID" value="AT4G01010"/>
</dbReference>
<dbReference type="GeneID" id="826427"/>
<dbReference type="Gramene" id="AT4G01010.1">
    <property type="protein sequence ID" value="AT4G01010.1"/>
    <property type="gene ID" value="AT4G01010"/>
</dbReference>
<dbReference type="Gramene" id="AT4G01010.2">
    <property type="protein sequence ID" value="AT4G01010.2"/>
    <property type="gene ID" value="AT4G01010"/>
</dbReference>
<dbReference type="KEGG" id="ath:AT4G01010"/>
<dbReference type="Araport" id="AT4G01010"/>
<dbReference type="TAIR" id="AT4G01010">
    <property type="gene designation" value="CNGC13"/>
</dbReference>
<dbReference type="eggNOG" id="KOG0498">
    <property type="taxonomic scope" value="Eukaryota"/>
</dbReference>
<dbReference type="HOGENOM" id="CLU_013069_3_0_1"/>
<dbReference type="InParanoid" id="Q9LD40"/>
<dbReference type="OMA" id="DRFRNAI"/>
<dbReference type="PhylomeDB" id="Q9LD40"/>
<dbReference type="PRO" id="PR:Q9LD40"/>
<dbReference type="Proteomes" id="UP000006548">
    <property type="component" value="Chromosome 4"/>
</dbReference>
<dbReference type="ExpressionAtlas" id="Q9LD40">
    <property type="expression patterns" value="baseline and differential"/>
</dbReference>
<dbReference type="GO" id="GO:0005886">
    <property type="term" value="C:plasma membrane"/>
    <property type="evidence" value="ECO:0007669"/>
    <property type="project" value="UniProtKB-SubCell"/>
</dbReference>
<dbReference type="GO" id="GO:0005516">
    <property type="term" value="F:calmodulin binding"/>
    <property type="evidence" value="ECO:0007669"/>
    <property type="project" value="UniProtKB-KW"/>
</dbReference>
<dbReference type="GO" id="GO:0030552">
    <property type="term" value="F:cAMP binding"/>
    <property type="evidence" value="ECO:0007669"/>
    <property type="project" value="UniProtKB-KW"/>
</dbReference>
<dbReference type="GO" id="GO:0030553">
    <property type="term" value="F:cGMP binding"/>
    <property type="evidence" value="ECO:0007669"/>
    <property type="project" value="UniProtKB-KW"/>
</dbReference>
<dbReference type="GO" id="GO:0005216">
    <property type="term" value="F:monoatomic ion channel activity"/>
    <property type="evidence" value="ECO:0007669"/>
    <property type="project" value="InterPro"/>
</dbReference>
<dbReference type="CDD" id="cd00038">
    <property type="entry name" value="CAP_ED"/>
    <property type="match status" value="1"/>
</dbReference>
<dbReference type="FunFam" id="1.10.287.630:FF:000003">
    <property type="entry name" value="Cyclic nucleotide-gated ion channel 1"/>
    <property type="match status" value="1"/>
</dbReference>
<dbReference type="FunFam" id="2.60.120.10:FF:000024">
    <property type="entry name" value="Cyclic nucleotide-gated ion channel 1"/>
    <property type="match status" value="1"/>
</dbReference>
<dbReference type="Gene3D" id="1.10.287.70">
    <property type="match status" value="1"/>
</dbReference>
<dbReference type="Gene3D" id="1.10.287.630">
    <property type="entry name" value="Helix hairpin bin"/>
    <property type="match status" value="1"/>
</dbReference>
<dbReference type="Gene3D" id="2.60.120.10">
    <property type="entry name" value="Jelly Rolls"/>
    <property type="match status" value="1"/>
</dbReference>
<dbReference type="InterPro" id="IPR000595">
    <property type="entry name" value="cNMP-bd_dom"/>
</dbReference>
<dbReference type="InterPro" id="IPR018490">
    <property type="entry name" value="cNMP-bd_dom_sf"/>
</dbReference>
<dbReference type="InterPro" id="IPR005821">
    <property type="entry name" value="Ion_trans_dom"/>
</dbReference>
<dbReference type="InterPro" id="IPR014710">
    <property type="entry name" value="RmlC-like_jellyroll"/>
</dbReference>
<dbReference type="PANTHER" id="PTHR45651:SF110">
    <property type="entry name" value="CYCLIC NUCLEOTIDE-GATED ION CHANNEL 10-RELATED"/>
    <property type="match status" value="1"/>
</dbReference>
<dbReference type="PANTHER" id="PTHR45651">
    <property type="entry name" value="CYCLIC NUCLEOTIDE-GATED ION CHANNEL 15-RELATED-RELATED"/>
    <property type="match status" value="1"/>
</dbReference>
<dbReference type="Pfam" id="PF00520">
    <property type="entry name" value="Ion_trans"/>
    <property type="match status" value="1"/>
</dbReference>
<dbReference type="SMART" id="SM00100">
    <property type="entry name" value="cNMP"/>
    <property type="match status" value="1"/>
</dbReference>
<dbReference type="SUPFAM" id="SSF51206">
    <property type="entry name" value="cAMP-binding domain-like"/>
    <property type="match status" value="1"/>
</dbReference>
<dbReference type="SUPFAM" id="SSF81324">
    <property type="entry name" value="Voltage-gated potassium channels"/>
    <property type="match status" value="1"/>
</dbReference>
<dbReference type="PROSITE" id="PS50042">
    <property type="entry name" value="CNMP_BINDING_3"/>
    <property type="match status" value="1"/>
</dbReference>
<organism>
    <name type="scientific">Arabidopsis thaliana</name>
    <name type="common">Mouse-ear cress</name>
    <dbReference type="NCBI Taxonomy" id="3702"/>
    <lineage>
        <taxon>Eukaryota</taxon>
        <taxon>Viridiplantae</taxon>
        <taxon>Streptophyta</taxon>
        <taxon>Embryophyta</taxon>
        <taxon>Tracheophyta</taxon>
        <taxon>Spermatophyta</taxon>
        <taxon>Magnoliopsida</taxon>
        <taxon>eudicotyledons</taxon>
        <taxon>Gunneridae</taxon>
        <taxon>Pentapetalae</taxon>
        <taxon>rosids</taxon>
        <taxon>malvids</taxon>
        <taxon>Brassicales</taxon>
        <taxon>Brassicaceae</taxon>
        <taxon>Camelineae</taxon>
        <taxon>Arabidopsis</taxon>
    </lineage>
</organism>
<name>CNG13_ARATH</name>